<name>CY064_POSPM</name>
<proteinExistence type="evidence at protein level"/>
<evidence type="ECO:0000250" key="1">
    <source>
        <dbReference type="UniProtKB" id="P04798"/>
    </source>
</evidence>
<evidence type="ECO:0000255" key="2"/>
<evidence type="ECO:0000255" key="3">
    <source>
        <dbReference type="PROSITE-ProRule" id="PRU00498"/>
    </source>
</evidence>
<evidence type="ECO:0000269" key="4">
    <source>
    </source>
</evidence>
<evidence type="ECO:0000303" key="5">
    <source>
    </source>
</evidence>
<evidence type="ECO:0000305" key="6"/>
<accession>F1SY66</accession>
<feature type="chain" id="PRO_0000451356" description="Cytochrome P450 monooxygenase 64">
    <location>
        <begin position="1"/>
        <end position="495"/>
    </location>
</feature>
<feature type="transmembrane region" description="Helical" evidence="2">
    <location>
        <begin position="2"/>
        <end position="22"/>
    </location>
</feature>
<feature type="binding site" description="axial binding residue" evidence="1">
    <location>
        <position position="428"/>
    </location>
    <ligand>
        <name>heme</name>
        <dbReference type="ChEBI" id="CHEBI:30413"/>
    </ligand>
    <ligandPart>
        <name>Fe</name>
        <dbReference type="ChEBI" id="CHEBI:18248"/>
    </ligandPart>
</feature>
<feature type="glycosylation site" description="N-linked (GlcNAc...) asparagine" evidence="3">
    <location>
        <position position="25"/>
    </location>
</feature>
<feature type="glycosylation site" description="N-linked (GlcNAc...) asparagine" evidence="3">
    <location>
        <position position="198"/>
    </location>
</feature>
<organism>
    <name type="scientific">Postia placenta (strain ATCC 44394 / Madison 698-R)</name>
    <name type="common">Brown rot fungus</name>
    <name type="synonym">Poria monticola</name>
    <dbReference type="NCBI Taxonomy" id="561896"/>
    <lineage>
        <taxon>Eukaryota</taxon>
        <taxon>Fungi</taxon>
        <taxon>Dikarya</taxon>
        <taxon>Basidiomycota</taxon>
        <taxon>Agaricomycotina</taxon>
        <taxon>Agaricomycetes</taxon>
        <taxon>Polyporales</taxon>
        <taxon>Adustoporiaceae</taxon>
        <taxon>Rhodonia</taxon>
    </lineage>
</organism>
<gene>
    <name evidence="5" type="primary">CYP064</name>
    <name evidence="5" type="synonym">CYP5152A3v1</name>
</gene>
<protein>
    <recommendedName>
        <fullName evidence="5">Cytochrome P450 monooxygenase 64</fullName>
        <ecNumber evidence="4">1.-.-.-</ecNumber>
    </recommendedName>
</protein>
<keyword id="KW-0325">Glycoprotein</keyword>
<keyword id="KW-0349">Heme</keyword>
<keyword id="KW-0408">Iron</keyword>
<keyword id="KW-0472">Membrane</keyword>
<keyword id="KW-0479">Metal-binding</keyword>
<keyword id="KW-0503">Monooxygenase</keyword>
<keyword id="KW-0560">Oxidoreductase</keyword>
<keyword id="KW-0812">Transmembrane</keyword>
<keyword id="KW-1133">Transmembrane helix</keyword>
<sequence>MFLQIVTSVLATGLLYALISVLQQNRTLSASLPPGPPGHWLFGNAPPRAFPYRHFAELTETYGPVFTLRFGRRIVCVIGRYQAAVDILMKHSAETSDRPRSVAANEIMSKGHRVLMTPAGERLKKYRRALHAFLQPSSSATYKPMQYKNAKNYVLDCLHDGRHHLYHGRKYAASVVMSVAYGKTTPTSYSDPEVLQINKSLARLGAALKPGAYLVDTYPILKYCPGYASHLRRYREEELALITKQANAVRELLAKGEAPPSFTAYLIENQERLGISDDELAYLSGAIFGAGSDTTAAALGIMTMAAACYPEAQARVQAQLDEVVGRDRAPTFEDEDLLPEVTAFVLEAYRWRPVSAGGFSHRATKDVVWNGYVIPAGAEIIGNHWAISRDPEVYPNPEDFKPARWLNEHGRIRNDLKFINFGFGRRVCVGQHVADQSLFINTALVLWAFRISQDAQCPIDTYAFTDTANVHPLPFSLHFEPRVKDMEAMLGAQAE</sequence>
<reference key="1">
    <citation type="journal article" date="2012" name="Arch. Microbiol.">
        <title>Molecular identification and functional characterization of cytochrome P450 monooxygenases from the brown-rot basidiomycete Postia placenta.</title>
        <authorList>
            <person name="Ide M."/>
            <person name="Ichinose H."/>
            <person name="Wariishi H."/>
        </authorList>
    </citation>
    <scope>NUCLEOTIDE SEQUENCE [MRNA]</scope>
    <scope>IDENTIFICATION</scope>
    <scope>FUNCTION</scope>
    <scope>CATALYTIC ACTIVITY</scope>
    <source>
        <strain>ATCC 44394 / Madison 698-R</strain>
    </source>
</reference>
<comment type="function">
    <text evidence="4">Cytochrome P450 monooxygenase that is able to use 4-ethoxybenzoic acid as a substrate for oxidation.</text>
</comment>
<comment type="cofactor">
    <cofactor evidence="1">
        <name>heme</name>
        <dbReference type="ChEBI" id="CHEBI:30413"/>
    </cofactor>
</comment>
<comment type="pathway">
    <text evidence="6">Secondary metabolite biosynthesis.</text>
</comment>
<comment type="subcellular location">
    <subcellularLocation>
        <location evidence="2">Membrane</location>
        <topology evidence="2">Single-pass membrane protein</topology>
    </subcellularLocation>
</comment>
<comment type="similarity">
    <text evidence="6">Belongs to the cytochrome P450 family.</text>
</comment>
<dbReference type="EC" id="1.-.-.-" evidence="4"/>
<dbReference type="EMBL" id="AB573277">
    <property type="protein sequence ID" value="BAK09410.1"/>
    <property type="molecule type" value="mRNA"/>
</dbReference>
<dbReference type="SMR" id="F1SY66"/>
<dbReference type="GlyCosmos" id="F1SY66">
    <property type="glycosylation" value="2 sites, No reported glycans"/>
</dbReference>
<dbReference type="GO" id="GO:0016020">
    <property type="term" value="C:membrane"/>
    <property type="evidence" value="ECO:0007669"/>
    <property type="project" value="UniProtKB-SubCell"/>
</dbReference>
<dbReference type="GO" id="GO:0020037">
    <property type="term" value="F:heme binding"/>
    <property type="evidence" value="ECO:0007669"/>
    <property type="project" value="InterPro"/>
</dbReference>
<dbReference type="GO" id="GO:0005506">
    <property type="term" value="F:iron ion binding"/>
    <property type="evidence" value="ECO:0007669"/>
    <property type="project" value="InterPro"/>
</dbReference>
<dbReference type="GO" id="GO:0004497">
    <property type="term" value="F:monooxygenase activity"/>
    <property type="evidence" value="ECO:0007669"/>
    <property type="project" value="UniProtKB-KW"/>
</dbReference>
<dbReference type="GO" id="GO:0016705">
    <property type="term" value="F:oxidoreductase activity, acting on paired donors, with incorporation or reduction of molecular oxygen"/>
    <property type="evidence" value="ECO:0007669"/>
    <property type="project" value="InterPro"/>
</dbReference>
<dbReference type="CDD" id="cd11065">
    <property type="entry name" value="CYP64-like"/>
    <property type="match status" value="1"/>
</dbReference>
<dbReference type="Gene3D" id="1.10.630.10">
    <property type="entry name" value="Cytochrome P450"/>
    <property type="match status" value="1"/>
</dbReference>
<dbReference type="InterPro" id="IPR001128">
    <property type="entry name" value="Cyt_P450"/>
</dbReference>
<dbReference type="InterPro" id="IPR017972">
    <property type="entry name" value="Cyt_P450_CS"/>
</dbReference>
<dbReference type="InterPro" id="IPR002401">
    <property type="entry name" value="Cyt_P450_E_grp-I"/>
</dbReference>
<dbReference type="InterPro" id="IPR036396">
    <property type="entry name" value="Cyt_P450_sf"/>
</dbReference>
<dbReference type="InterPro" id="IPR050364">
    <property type="entry name" value="Cytochrome_P450_fung"/>
</dbReference>
<dbReference type="PANTHER" id="PTHR46300:SF1">
    <property type="entry name" value="P450, PUTATIVE (EUROFUNG)-RELATED"/>
    <property type="match status" value="1"/>
</dbReference>
<dbReference type="PANTHER" id="PTHR46300">
    <property type="entry name" value="P450, PUTATIVE (EUROFUNG)-RELATED-RELATED"/>
    <property type="match status" value="1"/>
</dbReference>
<dbReference type="Pfam" id="PF00067">
    <property type="entry name" value="p450"/>
    <property type="match status" value="1"/>
</dbReference>
<dbReference type="PRINTS" id="PR00463">
    <property type="entry name" value="EP450I"/>
</dbReference>
<dbReference type="PRINTS" id="PR00385">
    <property type="entry name" value="P450"/>
</dbReference>
<dbReference type="SUPFAM" id="SSF48264">
    <property type="entry name" value="Cytochrome P450"/>
    <property type="match status" value="1"/>
</dbReference>
<dbReference type="PROSITE" id="PS00086">
    <property type="entry name" value="CYTOCHROME_P450"/>
    <property type="match status" value="1"/>
</dbReference>